<sequence>MTIALGKFTKDENDLFDIMDDWLRRDRFVFVGWSGLLLFPCAYFALGGWFTGTTFVTSWYTHGLASSYLEGCNFLTAAVSTPANSLAHSLLLLWGPEAQGDFTRWCQLGGLWTFVALHGAFALIGFMLRQFELARSVQLRPYNAIAFSGPIAVFVSVFLIYPLGQSGWFFAPSFGVAAIFRFILFFQGFHNWTLNPFHMMGVAGVLGAALLCAIHGATVENTLFEDGDGANTFRAFNPTQAEETYSMVTANRFWSQIFGVAFSNKRWLHFFMLFVPVTGLWMSALGVVGLALNLRAYDFVSQEIRAAEDPEFETFYTKNILLNEGIRAWMAAQDQPHENLIFPEEVLPRGNAL</sequence>
<dbReference type="EC" id="1.10.3.9" evidence="2"/>
<dbReference type="EMBL" id="DQ317523">
    <property type="protein sequence ID" value="ABC25120.1"/>
    <property type="molecule type" value="Genomic_DNA"/>
</dbReference>
<dbReference type="RefSeq" id="YP_538760.1">
    <property type="nucleotide sequence ID" value="NC_007942.1"/>
</dbReference>
<dbReference type="SMR" id="Q2PMT8"/>
<dbReference type="FunCoup" id="Q2PMT8">
    <property type="interactions" value="636"/>
</dbReference>
<dbReference type="STRING" id="3847.Q2PMT8"/>
<dbReference type="PaxDb" id="3847-GLYMA04G10151.1"/>
<dbReference type="GeneID" id="3989284"/>
<dbReference type="KEGG" id="gmx:3989284"/>
<dbReference type="eggNOG" id="ENOG502QWJF">
    <property type="taxonomic scope" value="Eukaryota"/>
</dbReference>
<dbReference type="InParanoid" id="Q2PMT8"/>
<dbReference type="Proteomes" id="UP000008827">
    <property type="component" value="Chloroplast"/>
</dbReference>
<dbReference type="GO" id="GO:0009535">
    <property type="term" value="C:chloroplast thylakoid membrane"/>
    <property type="evidence" value="ECO:0007669"/>
    <property type="project" value="UniProtKB-SubCell"/>
</dbReference>
<dbReference type="GO" id="GO:0009523">
    <property type="term" value="C:photosystem II"/>
    <property type="evidence" value="ECO:0000318"/>
    <property type="project" value="GO_Central"/>
</dbReference>
<dbReference type="GO" id="GO:0016168">
    <property type="term" value="F:chlorophyll binding"/>
    <property type="evidence" value="ECO:0007669"/>
    <property type="project" value="UniProtKB-UniRule"/>
</dbReference>
<dbReference type="GO" id="GO:0045156">
    <property type="term" value="F:electron transporter, transferring electrons within the cyclic electron transport pathway of photosynthesis activity"/>
    <property type="evidence" value="ECO:0007669"/>
    <property type="project" value="InterPro"/>
</dbReference>
<dbReference type="GO" id="GO:0005506">
    <property type="term" value="F:iron ion binding"/>
    <property type="evidence" value="ECO:0007669"/>
    <property type="project" value="UniProtKB-UniRule"/>
</dbReference>
<dbReference type="GO" id="GO:0010242">
    <property type="term" value="F:oxygen evolving activity"/>
    <property type="evidence" value="ECO:0007669"/>
    <property type="project" value="UniProtKB-EC"/>
</dbReference>
<dbReference type="GO" id="GO:0009772">
    <property type="term" value="P:photosynthetic electron transport in photosystem II"/>
    <property type="evidence" value="ECO:0007669"/>
    <property type="project" value="InterPro"/>
</dbReference>
<dbReference type="CDD" id="cd09288">
    <property type="entry name" value="Photosystem-II_D2"/>
    <property type="match status" value="1"/>
</dbReference>
<dbReference type="FunFam" id="1.20.85.10:FF:000001">
    <property type="entry name" value="photosystem II D2 protein-like"/>
    <property type="match status" value="1"/>
</dbReference>
<dbReference type="Gene3D" id="1.20.85.10">
    <property type="entry name" value="Photosystem II protein D1-like"/>
    <property type="match status" value="1"/>
</dbReference>
<dbReference type="HAMAP" id="MF_01383">
    <property type="entry name" value="PSII_PsbD_D2"/>
    <property type="match status" value="1"/>
</dbReference>
<dbReference type="InterPro" id="IPR055266">
    <property type="entry name" value="D1/D2"/>
</dbReference>
<dbReference type="InterPro" id="IPR036854">
    <property type="entry name" value="Photo_II_D1/D2_sf"/>
</dbReference>
<dbReference type="InterPro" id="IPR000484">
    <property type="entry name" value="Photo_RC_L/M"/>
</dbReference>
<dbReference type="InterPro" id="IPR055265">
    <property type="entry name" value="Photo_RC_L/M_CS"/>
</dbReference>
<dbReference type="InterPro" id="IPR005868">
    <property type="entry name" value="PSII_PsbD/D2"/>
</dbReference>
<dbReference type="NCBIfam" id="TIGR01152">
    <property type="entry name" value="psbD"/>
    <property type="match status" value="1"/>
</dbReference>
<dbReference type="PANTHER" id="PTHR33149:SF57">
    <property type="entry name" value="PHOTOSYSTEM II D2 PROTEIN"/>
    <property type="match status" value="1"/>
</dbReference>
<dbReference type="PANTHER" id="PTHR33149">
    <property type="entry name" value="PHOTOSYSTEM II PROTEIN D1"/>
    <property type="match status" value="1"/>
</dbReference>
<dbReference type="Pfam" id="PF00124">
    <property type="entry name" value="Photo_RC"/>
    <property type="match status" value="1"/>
</dbReference>
<dbReference type="PRINTS" id="PR00256">
    <property type="entry name" value="REACTNCENTRE"/>
</dbReference>
<dbReference type="SUPFAM" id="SSF81483">
    <property type="entry name" value="Bacterial photosystem II reaction centre, L and M subunits"/>
    <property type="match status" value="1"/>
</dbReference>
<dbReference type="PROSITE" id="PS00244">
    <property type="entry name" value="REACTION_CENTER"/>
    <property type="match status" value="1"/>
</dbReference>
<geneLocation type="chloroplast"/>
<protein>
    <recommendedName>
        <fullName evidence="2">Photosystem II D2 protein</fullName>
        <shortName evidence="2">PSII D2 protein</shortName>
        <ecNumber evidence="2">1.10.3.9</ecNumber>
    </recommendedName>
    <alternativeName>
        <fullName evidence="2">Photosystem Q(A) protein</fullName>
    </alternativeName>
</protein>
<reference key="1">
    <citation type="journal article" date="2005" name="Plant Mol. Biol.">
        <title>Complete chloroplast genome sequence of Glycine max and comparative analyses with other legume genomes.</title>
        <authorList>
            <person name="Saski C."/>
            <person name="Lee S.-B."/>
            <person name="Daniell H."/>
            <person name="Wood T.C."/>
            <person name="Tomkins J."/>
            <person name="Kim H.-G."/>
            <person name="Jansen R.K."/>
        </authorList>
    </citation>
    <scope>NUCLEOTIDE SEQUENCE [LARGE SCALE GENOMIC DNA]</scope>
    <source>
        <strain>cv. PI 437654</strain>
    </source>
</reference>
<keyword id="KW-0007">Acetylation</keyword>
<keyword id="KW-0148">Chlorophyll</keyword>
<keyword id="KW-0150">Chloroplast</keyword>
<keyword id="KW-0157">Chromophore</keyword>
<keyword id="KW-0249">Electron transport</keyword>
<keyword id="KW-0408">Iron</keyword>
<keyword id="KW-0460">Magnesium</keyword>
<keyword id="KW-0472">Membrane</keyword>
<keyword id="KW-0479">Metal-binding</keyword>
<keyword id="KW-0560">Oxidoreductase</keyword>
<keyword id="KW-0597">Phosphoprotein</keyword>
<keyword id="KW-0602">Photosynthesis</keyword>
<keyword id="KW-0604">Photosystem II</keyword>
<keyword id="KW-0934">Plastid</keyword>
<keyword id="KW-1185">Reference proteome</keyword>
<keyword id="KW-0793">Thylakoid</keyword>
<keyword id="KW-0812">Transmembrane</keyword>
<keyword id="KW-1133">Transmembrane helix</keyword>
<keyword id="KW-0813">Transport</keyword>
<accession>Q2PMT8</accession>
<gene>
    <name evidence="2" type="primary">psbD</name>
</gene>
<comment type="function">
    <text evidence="2">Photosystem II (PSII) is a light-driven water:plastoquinone oxidoreductase that uses light energy to abstract electrons from H(2)O, generating O(2) and a proton gradient subsequently used for ATP formation. It consists of a core antenna complex that captures photons, and an electron transfer chain that converts photonic excitation into a charge separation. The D1/D2 (PsbA/PsbD) reaction center heterodimer binds P680, the primary electron donor of PSII as well as several subsequent electron acceptors. D2 is needed for assembly of a stable PSII complex.</text>
</comment>
<comment type="catalytic activity">
    <reaction evidence="2">
        <text>2 a plastoquinone + 4 hnu + 2 H2O = 2 a plastoquinol + O2</text>
        <dbReference type="Rhea" id="RHEA:36359"/>
        <dbReference type="Rhea" id="RHEA-COMP:9561"/>
        <dbReference type="Rhea" id="RHEA-COMP:9562"/>
        <dbReference type="ChEBI" id="CHEBI:15377"/>
        <dbReference type="ChEBI" id="CHEBI:15379"/>
        <dbReference type="ChEBI" id="CHEBI:17757"/>
        <dbReference type="ChEBI" id="CHEBI:30212"/>
        <dbReference type="ChEBI" id="CHEBI:62192"/>
        <dbReference type="EC" id="1.10.3.9"/>
    </reaction>
</comment>
<comment type="cofactor">
    <text evidence="2">The D1/D2 heterodimer binds P680, chlorophylls that are the primary electron donor of PSII, and subsequent electron acceptors. It shares a non-heme iron and each subunit binds pheophytin, quinone, additional chlorophylls, carotenoids and lipids. There is also a Cl(-1) ion associated with D1 and D2, which is required for oxygen evolution. The PSII complex binds additional chlorophylls, carotenoids and specific lipids.</text>
</comment>
<comment type="subunit">
    <text evidence="2">PSII is composed of 1 copy each of membrane proteins PsbA, PsbB, PsbC, PsbD, PsbE, PsbF, PsbH, PsbI, PsbJ, PsbK, PsbL, PsbM, PsbT, PsbX, PsbY, PsbZ, Psb30/Ycf12, at least 3 peripheral proteins of the oxygen-evolving complex and a large number of cofactors. It forms dimeric complexes.</text>
</comment>
<comment type="subcellular location">
    <subcellularLocation>
        <location evidence="2">Plastid</location>
        <location evidence="2">Chloroplast thylakoid membrane</location>
        <topology evidence="2">Multi-pass membrane protein</topology>
    </subcellularLocation>
</comment>
<comment type="miscellaneous">
    <text evidence="2">2 of the reaction center chlorophylls (ChlD1 and ChlD2) are entirely coordinated by water.</text>
</comment>
<comment type="similarity">
    <text evidence="2">Belongs to the reaction center PufL/M/PsbA/D family.</text>
</comment>
<feature type="initiator methionine" description="Removed" evidence="1">
    <location>
        <position position="1"/>
    </location>
</feature>
<feature type="chain" id="PRO_0000277455" description="Photosystem II D2 protein">
    <location>
        <begin position="2"/>
        <end position="353"/>
    </location>
</feature>
<feature type="transmembrane region" description="Helical" evidence="2">
    <location>
        <begin position="41"/>
        <end position="61"/>
    </location>
</feature>
<feature type="transmembrane region" description="Helical" evidence="2">
    <location>
        <begin position="125"/>
        <end position="141"/>
    </location>
</feature>
<feature type="transmembrane region" description="Helical" evidence="2">
    <location>
        <begin position="153"/>
        <end position="166"/>
    </location>
</feature>
<feature type="transmembrane region" description="Helical" evidence="2">
    <location>
        <begin position="208"/>
        <end position="228"/>
    </location>
</feature>
<feature type="transmembrane region" description="Helical" evidence="2">
    <location>
        <begin position="279"/>
        <end position="295"/>
    </location>
</feature>
<feature type="binding site" description="axial binding residue" evidence="2">
    <location>
        <position position="118"/>
    </location>
    <ligand>
        <name>chlorophyll a</name>
        <dbReference type="ChEBI" id="CHEBI:58416"/>
        <label>ChlzD2</label>
    </ligand>
    <ligandPart>
        <name>Mg</name>
        <dbReference type="ChEBI" id="CHEBI:25107"/>
    </ligandPart>
</feature>
<feature type="binding site" evidence="2">
    <location>
        <position position="130"/>
    </location>
    <ligand>
        <name>pheophytin a</name>
        <dbReference type="ChEBI" id="CHEBI:136840"/>
        <label>D2</label>
    </ligand>
</feature>
<feature type="binding site" evidence="2">
    <location>
        <position position="143"/>
    </location>
    <ligand>
        <name>pheophytin a</name>
        <dbReference type="ChEBI" id="CHEBI:136840"/>
        <label>D2</label>
    </ligand>
</feature>
<feature type="binding site" description="axial binding residue" evidence="2">
    <location>
        <position position="198"/>
    </location>
    <ligand>
        <name>chlorophyll a</name>
        <dbReference type="ChEBI" id="CHEBI:58416"/>
        <label>PD2</label>
    </ligand>
    <ligandPart>
        <name>Mg</name>
        <dbReference type="ChEBI" id="CHEBI:25107"/>
    </ligandPart>
</feature>
<feature type="binding site" evidence="2">
    <location>
        <position position="215"/>
    </location>
    <ligand>
        <name>a plastoquinone</name>
        <dbReference type="ChEBI" id="CHEBI:17757"/>
        <label>Q(A)</label>
    </ligand>
</feature>
<feature type="binding site" evidence="2">
    <location>
        <position position="215"/>
    </location>
    <ligand>
        <name>Fe cation</name>
        <dbReference type="ChEBI" id="CHEBI:24875"/>
        <note>ligand shared with heterodimeric partner</note>
    </ligand>
</feature>
<feature type="binding site" evidence="2">
    <location>
        <position position="262"/>
    </location>
    <ligand>
        <name>a plastoquinone</name>
        <dbReference type="ChEBI" id="CHEBI:17757"/>
        <label>Q(A)</label>
    </ligand>
</feature>
<feature type="binding site" evidence="2">
    <location>
        <position position="269"/>
    </location>
    <ligand>
        <name>Fe cation</name>
        <dbReference type="ChEBI" id="CHEBI:24875"/>
        <note>ligand shared with heterodimeric partner</note>
    </ligand>
</feature>
<feature type="modified residue" description="N-acetylthreonine" evidence="1">
    <location>
        <position position="2"/>
    </location>
</feature>
<feature type="modified residue" description="Phosphothreonine" evidence="1">
    <location>
        <position position="2"/>
    </location>
</feature>
<evidence type="ECO:0000250" key="1">
    <source>
        <dbReference type="UniProtKB" id="P56761"/>
    </source>
</evidence>
<evidence type="ECO:0000255" key="2">
    <source>
        <dbReference type="HAMAP-Rule" id="MF_01383"/>
    </source>
</evidence>
<organism>
    <name type="scientific">Glycine max</name>
    <name type="common">Soybean</name>
    <name type="synonym">Glycine hispida</name>
    <dbReference type="NCBI Taxonomy" id="3847"/>
    <lineage>
        <taxon>Eukaryota</taxon>
        <taxon>Viridiplantae</taxon>
        <taxon>Streptophyta</taxon>
        <taxon>Embryophyta</taxon>
        <taxon>Tracheophyta</taxon>
        <taxon>Spermatophyta</taxon>
        <taxon>Magnoliopsida</taxon>
        <taxon>eudicotyledons</taxon>
        <taxon>Gunneridae</taxon>
        <taxon>Pentapetalae</taxon>
        <taxon>rosids</taxon>
        <taxon>fabids</taxon>
        <taxon>Fabales</taxon>
        <taxon>Fabaceae</taxon>
        <taxon>Papilionoideae</taxon>
        <taxon>50 kb inversion clade</taxon>
        <taxon>NPAAA clade</taxon>
        <taxon>indigoferoid/millettioid clade</taxon>
        <taxon>Phaseoleae</taxon>
        <taxon>Glycine</taxon>
        <taxon>Glycine subgen. Soja</taxon>
    </lineage>
</organism>
<name>PSBD_SOYBN</name>
<proteinExistence type="inferred from homology"/>